<keyword id="KW-0175">Coiled coil</keyword>
<keyword id="KW-0963">Cytoplasm</keyword>
<keyword id="KW-0217">Developmental protein</keyword>
<keyword id="KW-0479">Metal-binding</keyword>
<keyword id="KW-1185">Reference proteome</keyword>
<keyword id="KW-0677">Repeat</keyword>
<keyword id="KW-0862">Zinc</keyword>
<keyword id="KW-0863">Zinc-finger</keyword>
<accession>P11467</accession>
<accession>Q54FC1</accession>
<reference key="1">
    <citation type="journal article" date="1987" name="Mol. Cell. Biol.">
        <title>Two divergently transcribed genes of Dictyostelium discoideum are cyclic AMP-inducible and coregulated during development.</title>
        <authorList>
            <person name="Driscoll D.M."/>
            <person name="Williams J.G."/>
        </authorList>
    </citation>
    <scope>NUCLEOTIDE SEQUENCE [GENOMIC DNA]</scope>
    <scope>INDUCTION</scope>
</reference>
<reference key="2">
    <citation type="journal article" date="2005" name="Nature">
        <title>The genome of the social amoeba Dictyostelium discoideum.</title>
        <authorList>
            <person name="Eichinger L."/>
            <person name="Pachebat J.A."/>
            <person name="Gloeckner G."/>
            <person name="Rajandream M.A."/>
            <person name="Sucgang R."/>
            <person name="Berriman M."/>
            <person name="Song J."/>
            <person name="Olsen R."/>
            <person name="Szafranski K."/>
            <person name="Xu Q."/>
            <person name="Tunggal B."/>
            <person name="Kummerfeld S."/>
            <person name="Madera M."/>
            <person name="Konfortov B.A."/>
            <person name="Rivero F."/>
            <person name="Bankier A.T."/>
            <person name="Lehmann R."/>
            <person name="Hamlin N."/>
            <person name="Davies R."/>
            <person name="Gaudet P."/>
            <person name="Fey P."/>
            <person name="Pilcher K."/>
            <person name="Chen G."/>
            <person name="Saunders D."/>
            <person name="Sodergren E.J."/>
            <person name="Davis P."/>
            <person name="Kerhornou A."/>
            <person name="Nie X."/>
            <person name="Hall N."/>
            <person name="Anjard C."/>
            <person name="Hemphill L."/>
            <person name="Bason N."/>
            <person name="Farbrother P."/>
            <person name="Desany B."/>
            <person name="Just E."/>
            <person name="Morio T."/>
            <person name="Rost R."/>
            <person name="Churcher C.M."/>
            <person name="Cooper J."/>
            <person name="Haydock S."/>
            <person name="van Driessche N."/>
            <person name="Cronin A."/>
            <person name="Goodhead I."/>
            <person name="Muzny D.M."/>
            <person name="Mourier T."/>
            <person name="Pain A."/>
            <person name="Lu M."/>
            <person name="Harper D."/>
            <person name="Lindsay R."/>
            <person name="Hauser H."/>
            <person name="James K.D."/>
            <person name="Quiles M."/>
            <person name="Madan Babu M."/>
            <person name="Saito T."/>
            <person name="Buchrieser C."/>
            <person name="Wardroper A."/>
            <person name="Felder M."/>
            <person name="Thangavelu M."/>
            <person name="Johnson D."/>
            <person name="Knights A."/>
            <person name="Loulseged H."/>
            <person name="Mungall K.L."/>
            <person name="Oliver K."/>
            <person name="Price C."/>
            <person name="Quail M.A."/>
            <person name="Urushihara H."/>
            <person name="Hernandez J."/>
            <person name="Rabbinowitsch E."/>
            <person name="Steffen D."/>
            <person name="Sanders M."/>
            <person name="Ma J."/>
            <person name="Kohara Y."/>
            <person name="Sharp S."/>
            <person name="Simmonds M.N."/>
            <person name="Spiegler S."/>
            <person name="Tivey A."/>
            <person name="Sugano S."/>
            <person name="White B."/>
            <person name="Walker D."/>
            <person name="Woodward J.R."/>
            <person name="Winckler T."/>
            <person name="Tanaka Y."/>
            <person name="Shaulsky G."/>
            <person name="Schleicher M."/>
            <person name="Weinstock G.M."/>
            <person name="Rosenthal A."/>
            <person name="Cox E.C."/>
            <person name="Chisholm R.L."/>
            <person name="Gibbs R.A."/>
            <person name="Loomis W.F."/>
            <person name="Platzer M."/>
            <person name="Kay R.R."/>
            <person name="Williams J.G."/>
            <person name="Dear P.H."/>
            <person name="Noegel A.A."/>
            <person name="Barrell B.G."/>
            <person name="Kuspa A."/>
        </authorList>
    </citation>
    <scope>NUCLEOTIDE SEQUENCE [LARGE SCALE GENOMIC DNA]</scope>
    <source>
        <strain>AX4</strain>
    </source>
</reference>
<protein>
    <recommendedName>
        <fullName>RING finger protein DG17</fullName>
    </recommendedName>
    <alternativeName>
        <fullName>Probable TNF receptor-associated factor DDB_G0290961</fullName>
    </alternativeName>
</protein>
<feature type="chain" id="PRO_0000055896" description="RING finger protein DG17">
    <location>
        <begin position="1"/>
        <end position="460"/>
    </location>
</feature>
<feature type="domain" description="MATH" evidence="3">
    <location>
        <begin position="320"/>
        <end position="448"/>
    </location>
</feature>
<feature type="zinc finger region" description="RING-type">
    <location>
        <begin position="27"/>
        <end position="67"/>
    </location>
</feature>
<feature type="zinc finger region" description="TRAF-type 1" evidence="4">
    <location>
        <begin position="141"/>
        <end position="194"/>
    </location>
</feature>
<feature type="zinc finger region" description="TRAF-type 2" evidence="4">
    <location>
        <begin position="196"/>
        <end position="253"/>
    </location>
</feature>
<feature type="coiled-coil region" evidence="2">
    <location>
        <begin position="269"/>
        <end position="294"/>
    </location>
</feature>
<feature type="sequence conflict" description="In Ref. 1; AAA33192." evidence="6" ref="1">
    <original>D</original>
    <variation>V</variation>
    <location>
        <position position="116"/>
    </location>
</feature>
<feature type="sequence conflict" description="In Ref. 1; AAA33192." evidence="6" ref="1">
    <original>K</original>
    <variation>N</variation>
    <location>
        <position position="121"/>
    </location>
</feature>
<feature type="sequence conflict" description="In Ref. 1; AAA33192." evidence="6" ref="1">
    <original>LESHQNEC</original>
    <variation>IKMNG</variation>
    <location>
        <begin position="167"/>
        <end position="174"/>
    </location>
</feature>
<feature type="sequence conflict" description="In Ref. 1; AAA33192." evidence="6" ref="1">
    <original>K</original>
    <variation>KR</variation>
    <location>
        <position position="410"/>
    </location>
</feature>
<evidence type="ECO:0000250" key="1"/>
<evidence type="ECO:0000255" key="2"/>
<evidence type="ECO:0000255" key="3">
    <source>
        <dbReference type="PROSITE-ProRule" id="PRU00129"/>
    </source>
</evidence>
<evidence type="ECO:0000255" key="4">
    <source>
        <dbReference type="PROSITE-ProRule" id="PRU00207"/>
    </source>
</evidence>
<evidence type="ECO:0000269" key="5">
    <source>
    </source>
</evidence>
<evidence type="ECO:0000305" key="6"/>
<organism>
    <name type="scientific">Dictyostelium discoideum</name>
    <name type="common">Social amoeba</name>
    <dbReference type="NCBI Taxonomy" id="44689"/>
    <lineage>
        <taxon>Eukaryota</taxon>
        <taxon>Amoebozoa</taxon>
        <taxon>Evosea</taxon>
        <taxon>Eumycetozoa</taxon>
        <taxon>Dictyostelia</taxon>
        <taxon>Dictyosteliales</taxon>
        <taxon>Dictyosteliaceae</taxon>
        <taxon>Dictyostelium</taxon>
    </lineage>
</organism>
<gene>
    <name type="primary">zfaA</name>
    <name type="synonym">DG17</name>
    <name type="ORF">DDB_G0290961</name>
</gene>
<name>DG17_DICDI</name>
<comment type="function">
    <text evidence="1">Probable adapter protein and signal transducer that links members of the tumor necrosis factor receptor family to different signaling pathways by association with the receptor cytoplasmic domain and kinases.</text>
</comment>
<comment type="subcellular location">
    <subcellularLocation>
        <location evidence="1">Cytoplasm</location>
    </subcellularLocation>
</comment>
<comment type="induction">
    <text evidence="5">By cAMP during aggregation.</text>
</comment>
<comment type="domain">
    <text evidence="1">The MATH/TRAF domain binds to receptor cytoplasmic domains.</text>
</comment>
<comment type="miscellaneous">
    <text>The expression of DG17 protein is developmentally regulated.</text>
</comment>
<comment type="similarity">
    <text evidence="6">Belongs to the TNF receptor-associated factor family. A subfamily.</text>
</comment>
<dbReference type="EMBL" id="M18106">
    <property type="protein sequence ID" value="AAA33192.1"/>
    <property type="molecule type" value="Genomic_DNA"/>
</dbReference>
<dbReference type="EMBL" id="AAFI02000174">
    <property type="protein sequence ID" value="EAL61911.1"/>
    <property type="molecule type" value="Genomic_DNA"/>
</dbReference>
<dbReference type="PIR" id="A29361">
    <property type="entry name" value="A29361"/>
</dbReference>
<dbReference type="RefSeq" id="XP_635416.1">
    <property type="nucleotide sequence ID" value="XM_630324.1"/>
</dbReference>
<dbReference type="SMR" id="P11467"/>
<dbReference type="FunCoup" id="P11467">
    <property type="interactions" value="7"/>
</dbReference>
<dbReference type="STRING" id="44689.P11467"/>
<dbReference type="PaxDb" id="44689-DDB0216198"/>
<dbReference type="EnsemblProtists" id="EAL61911">
    <property type="protein sequence ID" value="EAL61911"/>
    <property type="gene ID" value="DDB_G0290961"/>
</dbReference>
<dbReference type="GeneID" id="8627917"/>
<dbReference type="KEGG" id="ddi:DDB_G0290961"/>
<dbReference type="dictyBase" id="DDB_G0290961">
    <property type="gene designation" value="trafD"/>
</dbReference>
<dbReference type="VEuPathDB" id="AmoebaDB:DDB_G0290961"/>
<dbReference type="eggNOG" id="KOG0297">
    <property type="taxonomic scope" value="Eukaryota"/>
</dbReference>
<dbReference type="HOGENOM" id="CLU_040980_0_0_1"/>
<dbReference type="InParanoid" id="P11467"/>
<dbReference type="OMA" id="WREFIKC"/>
<dbReference type="PhylomeDB" id="P11467"/>
<dbReference type="PRO" id="PR:P11467"/>
<dbReference type="Proteomes" id="UP000002195">
    <property type="component" value="Chromosome 5"/>
</dbReference>
<dbReference type="GO" id="GO:0005737">
    <property type="term" value="C:cytoplasm"/>
    <property type="evidence" value="ECO:0000318"/>
    <property type="project" value="GO_Central"/>
</dbReference>
<dbReference type="GO" id="GO:0008270">
    <property type="term" value="F:zinc ion binding"/>
    <property type="evidence" value="ECO:0007669"/>
    <property type="project" value="UniProtKB-KW"/>
</dbReference>
<dbReference type="CDD" id="cd00121">
    <property type="entry name" value="MATH"/>
    <property type="match status" value="1"/>
</dbReference>
<dbReference type="CDD" id="cd16571">
    <property type="entry name" value="RING-HC_SIAHs"/>
    <property type="match status" value="1"/>
</dbReference>
<dbReference type="Gene3D" id="2.60.210.10">
    <property type="entry name" value="Apoptosis, Tumor Necrosis Factor Receptor Associated Protein 2, Chain A"/>
    <property type="match status" value="1"/>
</dbReference>
<dbReference type="Gene3D" id="3.30.40.10">
    <property type="entry name" value="Zinc/RING finger domain, C3HC4 (zinc finger)"/>
    <property type="match status" value="4"/>
</dbReference>
<dbReference type="InterPro" id="IPR002083">
    <property type="entry name" value="MATH/TRAF_dom"/>
</dbReference>
<dbReference type="InterPro" id="IPR049548">
    <property type="entry name" value="Sina-like_RING"/>
</dbReference>
<dbReference type="InterPro" id="IPR008974">
    <property type="entry name" value="TRAF-like"/>
</dbReference>
<dbReference type="InterPro" id="IPR013083">
    <property type="entry name" value="Znf_RING/FYVE/PHD"/>
</dbReference>
<dbReference type="InterPro" id="IPR001293">
    <property type="entry name" value="Znf_TRAF"/>
</dbReference>
<dbReference type="PANTHER" id="PTHR10131:SF65">
    <property type="entry name" value="RING FINGER PROTEIN DG17-RELATED"/>
    <property type="match status" value="1"/>
</dbReference>
<dbReference type="PANTHER" id="PTHR10131">
    <property type="entry name" value="TNF RECEPTOR ASSOCIATED FACTOR"/>
    <property type="match status" value="1"/>
</dbReference>
<dbReference type="Pfam" id="PF00917">
    <property type="entry name" value="MATH"/>
    <property type="match status" value="1"/>
</dbReference>
<dbReference type="Pfam" id="PF21362">
    <property type="entry name" value="Sina_RING"/>
    <property type="match status" value="1"/>
</dbReference>
<dbReference type="Pfam" id="PF02176">
    <property type="entry name" value="zf-TRAF"/>
    <property type="match status" value="2"/>
</dbReference>
<dbReference type="SMART" id="SM00061">
    <property type="entry name" value="MATH"/>
    <property type="match status" value="1"/>
</dbReference>
<dbReference type="SUPFAM" id="SSF57850">
    <property type="entry name" value="RING/U-box"/>
    <property type="match status" value="1"/>
</dbReference>
<dbReference type="SUPFAM" id="SSF49599">
    <property type="entry name" value="TRAF domain-like"/>
    <property type="match status" value="3"/>
</dbReference>
<dbReference type="PROSITE" id="PS50144">
    <property type="entry name" value="MATH"/>
    <property type="match status" value="1"/>
</dbReference>
<dbReference type="PROSITE" id="PS50145">
    <property type="entry name" value="ZF_TRAF"/>
    <property type="match status" value="2"/>
</dbReference>
<sequence length="460" mass="53286">MSIDIKFTINDILFNQESLQKKNKYTCPICFEFIYKKQIYQCKSGHHACKECWEKSLETKKECMTCKSVVNSYNDLSRCLMVERAFDKKECCCIYSFNEQIVEGGTNCSPPDGASDQNQRKLIKDEENGCKEKIEVDQIDSHLINCQYKFVTCSFKGCEKILRMNSLESHQNECGFKLVTCDFCKRDDIKKKELETHYKTCPMVPIDCSQGCSVKIERKSIIDHIENDCCNTQIPCKYFEQGCKVEMKRSELQNHLERVNHQNYMGILIEKLTNQVGQSKKTHDELLKKIEDLSLLVIKFSDACLKKQVLPKALDICSNGYRNKWIISNYSSVAKSKLNCQALSSPMLSILSHLFQVCVYPKGDENKEYISLYLRVNNIEEPNSLKVEYSFTLVNVLDKSKSITKKEDKKVFISSEGWGWGKFLLSDLINKENGWLSNDDKLIIEIYIKILNEEYEPLES</sequence>
<proteinExistence type="evidence at transcript level"/>